<dbReference type="EMBL" id="U20229">
    <property type="protein sequence ID" value="AAA62139.1"/>
    <property type="molecule type" value="Genomic_DNA"/>
</dbReference>
<dbReference type="EMBL" id="L42023">
    <property type="protein sequence ID" value="AAC21828.1"/>
    <property type="molecule type" value="Genomic_DNA"/>
</dbReference>
<dbReference type="PIR" id="H64051">
    <property type="entry name" value="H64051"/>
</dbReference>
<dbReference type="RefSeq" id="NP_438329.1">
    <property type="nucleotide sequence ID" value="NC_000907.1"/>
</dbReference>
<dbReference type="STRING" id="71421.HI_0159"/>
<dbReference type="EnsemblBacteria" id="AAC21828">
    <property type="protein sequence ID" value="AAC21828"/>
    <property type="gene ID" value="HI_0159"/>
</dbReference>
<dbReference type="KEGG" id="hin:HI_0159"/>
<dbReference type="PATRIC" id="fig|71421.8.peg.165"/>
<dbReference type="eggNOG" id="COG1399">
    <property type="taxonomic scope" value="Bacteria"/>
</dbReference>
<dbReference type="HOGENOM" id="CLU_094127_2_1_6"/>
<dbReference type="OrthoDB" id="9786771at2"/>
<dbReference type="PhylomeDB" id="P43790"/>
<dbReference type="BioCyc" id="HINF71421:G1GJ1-171-MONOMER"/>
<dbReference type="Proteomes" id="UP000000579">
    <property type="component" value="Chromosome"/>
</dbReference>
<dbReference type="GO" id="GO:0005829">
    <property type="term" value="C:cytosol"/>
    <property type="evidence" value="ECO:0000318"/>
    <property type="project" value="GO_Central"/>
</dbReference>
<dbReference type="GO" id="GO:0042254">
    <property type="term" value="P:ribosome biogenesis"/>
    <property type="evidence" value="ECO:0007669"/>
    <property type="project" value="UniProtKB-KW"/>
</dbReference>
<dbReference type="InterPro" id="IPR003772">
    <property type="entry name" value="YceD"/>
</dbReference>
<dbReference type="InterPro" id="IPR039255">
    <property type="entry name" value="YceD_bac"/>
</dbReference>
<dbReference type="NCBIfam" id="NF008395">
    <property type="entry name" value="PRK11193.1"/>
    <property type="match status" value="1"/>
</dbReference>
<dbReference type="PANTHER" id="PTHR38099">
    <property type="entry name" value="LARGE RIBOSOMAL RNA SUBUNIT ACCUMULATION PROTEIN YCED"/>
    <property type="match status" value="1"/>
</dbReference>
<dbReference type="PANTHER" id="PTHR38099:SF1">
    <property type="entry name" value="LARGE RIBOSOMAL RNA SUBUNIT ACCUMULATION PROTEIN YCED"/>
    <property type="match status" value="1"/>
</dbReference>
<dbReference type="Pfam" id="PF02620">
    <property type="entry name" value="YceD"/>
    <property type="match status" value="1"/>
</dbReference>
<comment type="function">
    <text evidence="1">Plays a role in synthesis, processing and/or stability of 23S rRNA.</text>
</comment>
<comment type="similarity">
    <text evidence="2">Belongs to the DUF177 domain family.</text>
</comment>
<proteinExistence type="inferred from homology"/>
<accession>P43790</accession>
<organism>
    <name type="scientific">Haemophilus influenzae (strain ATCC 51907 / DSM 11121 / KW20 / Rd)</name>
    <dbReference type="NCBI Taxonomy" id="71421"/>
    <lineage>
        <taxon>Bacteria</taxon>
        <taxon>Pseudomonadati</taxon>
        <taxon>Pseudomonadota</taxon>
        <taxon>Gammaproteobacteria</taxon>
        <taxon>Pasteurellales</taxon>
        <taxon>Pasteurellaceae</taxon>
        <taxon>Haemophilus</taxon>
    </lineage>
</organism>
<gene>
    <name type="primary">yceD</name>
    <name type="ordered locus">HI_0159</name>
</gene>
<reference key="1">
    <citation type="submission" date="1995-01" db="EMBL/GenBank/DDBJ databases">
        <authorList>
            <person name="Barcak G.J."/>
            <person name="Heimer S.R."/>
        </authorList>
    </citation>
    <scope>NUCLEOTIDE SEQUENCE [GENOMIC DNA]</scope>
    <source>
        <strain>ATCC 51907 / DSM 11121 / KW20 / Rd</strain>
    </source>
</reference>
<reference key="2">
    <citation type="journal article" date="1995" name="Science">
        <title>Whole-genome random sequencing and assembly of Haemophilus influenzae Rd.</title>
        <authorList>
            <person name="Fleischmann R.D."/>
            <person name="Adams M.D."/>
            <person name="White O."/>
            <person name="Clayton R.A."/>
            <person name="Kirkness E.F."/>
            <person name="Kerlavage A.R."/>
            <person name="Bult C.J."/>
            <person name="Tomb J.-F."/>
            <person name="Dougherty B.A."/>
            <person name="Merrick J.M."/>
            <person name="McKenney K."/>
            <person name="Sutton G.G."/>
            <person name="FitzHugh W."/>
            <person name="Fields C.A."/>
            <person name="Gocayne J.D."/>
            <person name="Scott J.D."/>
            <person name="Shirley R."/>
            <person name="Liu L.-I."/>
            <person name="Glodek A."/>
            <person name="Kelley J.M."/>
            <person name="Weidman J.F."/>
            <person name="Phillips C.A."/>
            <person name="Spriggs T."/>
            <person name="Hedblom E."/>
            <person name="Cotton M.D."/>
            <person name="Utterback T.R."/>
            <person name="Hanna M.C."/>
            <person name="Nguyen D.T."/>
            <person name="Saudek D.M."/>
            <person name="Brandon R.C."/>
            <person name="Fine L.D."/>
            <person name="Fritchman J.L."/>
            <person name="Fuhrmann J.L."/>
            <person name="Geoghagen N.S.M."/>
            <person name="Gnehm C.L."/>
            <person name="McDonald L.A."/>
            <person name="Small K.V."/>
            <person name="Fraser C.M."/>
            <person name="Smith H.O."/>
            <person name="Venter J.C."/>
        </authorList>
    </citation>
    <scope>NUCLEOTIDE SEQUENCE [LARGE SCALE GENOMIC DNA]</scope>
    <source>
        <strain>ATCC 51907 / DSM 11121 / KW20 / Rd</strain>
    </source>
</reference>
<keyword id="KW-1185">Reference proteome</keyword>
<keyword id="KW-0690">Ribosome biogenesis</keyword>
<protein>
    <recommendedName>
        <fullName>Large ribosomal RNA subunit accumulation protein YceD</fullName>
    </recommendedName>
    <alternativeName>
        <fullName>23S rRNA accumulation protein YceD</fullName>
    </alternativeName>
</protein>
<feature type="chain" id="PRO_0000168816" description="Large ribosomal RNA subunit accumulation protein YceD">
    <location>
        <begin position="1"/>
        <end position="174"/>
    </location>
</feature>
<sequence length="174" mass="19744">MQKVKLPLTVDPIKDAQRRLDYVGYYAANQLERLAESVVNVLSDAQVTLSFYVDPQKLVVMKGKVQIDVDLECQRCNEPYKQTLECEFTYSPVANWDQADDLPEIYEPIEFNEFGEIDLIGTVEDELILALPLVPMHSSEHCEVSAQEQVFGVLPEELAKKPNPFAVLANLKQK</sequence>
<name>YCED_HAEIN</name>
<evidence type="ECO:0000250" key="1">
    <source>
        <dbReference type="UniProtKB" id="P0AB28"/>
    </source>
</evidence>
<evidence type="ECO:0000305" key="2"/>